<keyword id="KW-0456">Lyase</keyword>
<keyword id="KW-1185">Reference proteome</keyword>
<proteinExistence type="inferred from homology"/>
<evidence type="ECO:0000255" key="1">
    <source>
        <dbReference type="HAMAP-Rule" id="MF_00549"/>
    </source>
</evidence>
<evidence type="ECO:0000305" key="2"/>
<dbReference type="EC" id="4.2.3.3" evidence="1"/>
<dbReference type="EMBL" id="L42023">
    <property type="protein sequence ID" value="AAC22887.1"/>
    <property type="molecule type" value="Genomic_DNA"/>
</dbReference>
<dbReference type="PIR" id="D64169">
    <property type="entry name" value="D64169"/>
</dbReference>
<dbReference type="RefSeq" id="NP_439390.1">
    <property type="nucleotide sequence ID" value="NC_000907.1"/>
</dbReference>
<dbReference type="STRING" id="71421.HI_1234"/>
<dbReference type="EnsemblBacteria" id="AAC22887">
    <property type="protein sequence ID" value="AAC22887"/>
    <property type="gene ID" value="HI_1234"/>
</dbReference>
<dbReference type="KEGG" id="hin:HI_1234"/>
<dbReference type="PATRIC" id="fig|71421.8.peg.1286"/>
<dbReference type="eggNOG" id="COG1803">
    <property type="taxonomic scope" value="Bacteria"/>
</dbReference>
<dbReference type="HOGENOM" id="CLU_120420_0_1_6"/>
<dbReference type="OrthoDB" id="9787147at2"/>
<dbReference type="PhylomeDB" id="P45120"/>
<dbReference type="BioCyc" id="HINF71421:G1GJ1-1265-MONOMER"/>
<dbReference type="Proteomes" id="UP000000579">
    <property type="component" value="Chromosome"/>
</dbReference>
<dbReference type="GO" id="GO:0005829">
    <property type="term" value="C:cytosol"/>
    <property type="evidence" value="ECO:0000318"/>
    <property type="project" value="GO_Central"/>
</dbReference>
<dbReference type="GO" id="GO:0008929">
    <property type="term" value="F:methylglyoxal synthase activity"/>
    <property type="evidence" value="ECO:0000318"/>
    <property type="project" value="GO_Central"/>
</dbReference>
<dbReference type="GO" id="GO:0019242">
    <property type="term" value="P:methylglyoxal biosynthetic process"/>
    <property type="evidence" value="ECO:0000318"/>
    <property type="project" value="GO_Central"/>
</dbReference>
<dbReference type="CDD" id="cd01422">
    <property type="entry name" value="MGS"/>
    <property type="match status" value="1"/>
</dbReference>
<dbReference type="FunFam" id="3.40.50.1380:FF:000002">
    <property type="entry name" value="Methylglyoxal synthase"/>
    <property type="match status" value="1"/>
</dbReference>
<dbReference type="Gene3D" id="3.40.50.1380">
    <property type="entry name" value="Methylglyoxal synthase-like domain"/>
    <property type="match status" value="1"/>
</dbReference>
<dbReference type="HAMAP" id="MF_00549">
    <property type="entry name" value="Methylglyoxal_synth"/>
    <property type="match status" value="1"/>
</dbReference>
<dbReference type="InterPro" id="IPR004363">
    <property type="entry name" value="Methylgl_synth"/>
</dbReference>
<dbReference type="InterPro" id="IPR018148">
    <property type="entry name" value="Methylglyoxal_synth_AS"/>
</dbReference>
<dbReference type="InterPro" id="IPR011607">
    <property type="entry name" value="MGS-like_dom"/>
</dbReference>
<dbReference type="InterPro" id="IPR036914">
    <property type="entry name" value="MGS-like_dom_sf"/>
</dbReference>
<dbReference type="NCBIfam" id="TIGR00160">
    <property type="entry name" value="MGSA"/>
    <property type="match status" value="1"/>
</dbReference>
<dbReference type="NCBIfam" id="NF003559">
    <property type="entry name" value="PRK05234.1"/>
    <property type="match status" value="1"/>
</dbReference>
<dbReference type="PANTHER" id="PTHR30492">
    <property type="entry name" value="METHYLGLYOXAL SYNTHASE"/>
    <property type="match status" value="1"/>
</dbReference>
<dbReference type="PANTHER" id="PTHR30492:SF0">
    <property type="entry name" value="METHYLGLYOXAL SYNTHASE"/>
    <property type="match status" value="1"/>
</dbReference>
<dbReference type="Pfam" id="PF02142">
    <property type="entry name" value="MGS"/>
    <property type="match status" value="1"/>
</dbReference>
<dbReference type="PIRSF" id="PIRSF006614">
    <property type="entry name" value="Methylglyox_syn"/>
    <property type="match status" value="1"/>
</dbReference>
<dbReference type="SMART" id="SM00851">
    <property type="entry name" value="MGS"/>
    <property type="match status" value="1"/>
</dbReference>
<dbReference type="SUPFAM" id="SSF52335">
    <property type="entry name" value="Methylglyoxal synthase-like"/>
    <property type="match status" value="1"/>
</dbReference>
<dbReference type="PROSITE" id="PS01335">
    <property type="entry name" value="METHYLGLYOXAL_SYNTH"/>
    <property type="match status" value="1"/>
</dbReference>
<dbReference type="PROSITE" id="PS51855">
    <property type="entry name" value="MGS"/>
    <property type="match status" value="1"/>
</dbReference>
<name>MGSA_HAEIN</name>
<sequence>MQTTTRTLTQHKRIALVAHDSCKKNLLNWTQKHKEALKPHILYATGTTGHILERETGLSIQSLLSGPMGGDQQLGGLIAEKKIDMMIFFWXPMNAAPHEPDVKALMRIATVWNIPVAINQSSADFLLTSVLFEQDVEIDVPDYEGYLKERLA</sequence>
<accession>P45120</accession>
<reference key="1">
    <citation type="journal article" date="1995" name="Science">
        <title>Whole-genome random sequencing and assembly of Haemophilus influenzae Rd.</title>
        <authorList>
            <person name="Fleischmann R.D."/>
            <person name="Adams M.D."/>
            <person name="White O."/>
            <person name="Clayton R.A."/>
            <person name="Kirkness E.F."/>
            <person name="Kerlavage A.R."/>
            <person name="Bult C.J."/>
            <person name="Tomb J.-F."/>
            <person name="Dougherty B.A."/>
            <person name="Merrick J.M."/>
            <person name="McKenney K."/>
            <person name="Sutton G.G."/>
            <person name="FitzHugh W."/>
            <person name="Fields C.A."/>
            <person name="Gocayne J.D."/>
            <person name="Scott J.D."/>
            <person name="Shirley R."/>
            <person name="Liu L.-I."/>
            <person name="Glodek A."/>
            <person name="Kelley J.M."/>
            <person name="Weidman J.F."/>
            <person name="Phillips C.A."/>
            <person name="Spriggs T."/>
            <person name="Hedblom E."/>
            <person name="Cotton M.D."/>
            <person name="Utterback T.R."/>
            <person name="Hanna M.C."/>
            <person name="Nguyen D.T."/>
            <person name="Saudek D.M."/>
            <person name="Brandon R.C."/>
            <person name="Fine L.D."/>
            <person name="Fritchman J.L."/>
            <person name="Fuhrmann J.L."/>
            <person name="Geoghagen N.S.M."/>
            <person name="Gnehm C.L."/>
            <person name="McDonald L.A."/>
            <person name="Small K.V."/>
            <person name="Fraser C.M."/>
            <person name="Smith H.O."/>
            <person name="Venter J.C."/>
        </authorList>
    </citation>
    <scope>NUCLEOTIDE SEQUENCE [LARGE SCALE GENOMIC DNA]</scope>
    <source>
        <strain>ATCC 51907 / DSM 11121 / KW20 / Rd</strain>
    </source>
</reference>
<comment type="function">
    <text evidence="1">Catalyzes the formation of methylglyoxal from dihydroxyacetone phosphate.</text>
</comment>
<comment type="catalytic activity">
    <reaction evidence="1">
        <text>dihydroxyacetone phosphate = methylglyoxal + phosphate</text>
        <dbReference type="Rhea" id="RHEA:17937"/>
        <dbReference type="ChEBI" id="CHEBI:17158"/>
        <dbReference type="ChEBI" id="CHEBI:43474"/>
        <dbReference type="ChEBI" id="CHEBI:57642"/>
        <dbReference type="EC" id="4.2.3.3"/>
    </reaction>
</comment>
<comment type="similarity">
    <text evidence="1 2">Belongs to the methylglyoxal synthase family.</text>
</comment>
<feature type="chain" id="PRO_0000178631" description="Methylglyoxal synthase">
    <location>
        <begin position="1"/>
        <end position="152"/>
    </location>
</feature>
<feature type="domain" description="MGS-like" evidence="1">
    <location>
        <begin position="6"/>
        <end position="152"/>
    </location>
</feature>
<feature type="active site" description="Proton donor/acceptor" evidence="1">
    <location>
        <position position="71"/>
    </location>
</feature>
<feature type="binding site" evidence="1">
    <location>
        <position position="19"/>
    </location>
    <ligand>
        <name>substrate</name>
    </ligand>
</feature>
<feature type="binding site" evidence="1">
    <location>
        <position position="23"/>
    </location>
    <ligand>
        <name>substrate</name>
    </ligand>
</feature>
<feature type="binding site" evidence="1">
    <location>
        <begin position="45"/>
        <end position="48"/>
    </location>
    <ligand>
        <name>substrate</name>
    </ligand>
</feature>
<feature type="binding site" evidence="1">
    <location>
        <begin position="65"/>
        <end position="66"/>
    </location>
    <ligand>
        <name>substrate</name>
    </ligand>
</feature>
<feature type="binding site" evidence="1">
    <location>
        <position position="98"/>
    </location>
    <ligand>
        <name>substrate</name>
    </ligand>
</feature>
<gene>
    <name evidence="1" type="primary">mgsA</name>
    <name type="ordered locus">HI_1234</name>
</gene>
<protein>
    <recommendedName>
        <fullName evidence="1">Methylglyoxal synthase</fullName>
        <shortName evidence="1">MGS</shortName>
        <ecNumber evidence="1">4.2.3.3</ecNumber>
    </recommendedName>
</protein>
<organism>
    <name type="scientific">Haemophilus influenzae (strain ATCC 51907 / DSM 11121 / KW20 / Rd)</name>
    <dbReference type="NCBI Taxonomy" id="71421"/>
    <lineage>
        <taxon>Bacteria</taxon>
        <taxon>Pseudomonadati</taxon>
        <taxon>Pseudomonadota</taxon>
        <taxon>Gammaproteobacteria</taxon>
        <taxon>Pasteurellales</taxon>
        <taxon>Pasteurellaceae</taxon>
        <taxon>Haemophilus</taxon>
    </lineage>
</organism>